<evidence type="ECO:0000255" key="1">
    <source>
        <dbReference type="HAMAP-Rule" id="MF_00235"/>
    </source>
</evidence>
<keyword id="KW-0067">ATP-binding</keyword>
<keyword id="KW-0963">Cytoplasm</keyword>
<keyword id="KW-0418">Kinase</keyword>
<keyword id="KW-0545">Nucleotide biosynthesis</keyword>
<keyword id="KW-0547">Nucleotide-binding</keyword>
<keyword id="KW-1185">Reference proteome</keyword>
<keyword id="KW-0808">Transferase</keyword>
<dbReference type="EC" id="2.7.4.3" evidence="1"/>
<dbReference type="EMBL" id="CP000872">
    <property type="protein sequence ID" value="ABX62284.1"/>
    <property type="molecule type" value="Genomic_DNA"/>
</dbReference>
<dbReference type="RefSeq" id="WP_004689762.1">
    <property type="nucleotide sequence ID" value="NC_010103.1"/>
</dbReference>
<dbReference type="SMR" id="A9M5M9"/>
<dbReference type="KEGG" id="bcs:BCAN_A1235"/>
<dbReference type="HOGENOM" id="CLU_032354_4_1_5"/>
<dbReference type="PhylomeDB" id="A9M5M9"/>
<dbReference type="UniPathway" id="UPA00588">
    <property type="reaction ID" value="UER00649"/>
</dbReference>
<dbReference type="Proteomes" id="UP000001385">
    <property type="component" value="Chromosome I"/>
</dbReference>
<dbReference type="GO" id="GO:0005737">
    <property type="term" value="C:cytoplasm"/>
    <property type="evidence" value="ECO:0007669"/>
    <property type="project" value="UniProtKB-SubCell"/>
</dbReference>
<dbReference type="GO" id="GO:0004017">
    <property type="term" value="F:adenylate kinase activity"/>
    <property type="evidence" value="ECO:0007669"/>
    <property type="project" value="UniProtKB-UniRule"/>
</dbReference>
<dbReference type="GO" id="GO:0005524">
    <property type="term" value="F:ATP binding"/>
    <property type="evidence" value="ECO:0007669"/>
    <property type="project" value="UniProtKB-UniRule"/>
</dbReference>
<dbReference type="GO" id="GO:0044209">
    <property type="term" value="P:AMP salvage"/>
    <property type="evidence" value="ECO:0007669"/>
    <property type="project" value="UniProtKB-UniRule"/>
</dbReference>
<dbReference type="CDD" id="cd01428">
    <property type="entry name" value="ADK"/>
    <property type="match status" value="1"/>
</dbReference>
<dbReference type="Gene3D" id="3.40.50.300">
    <property type="entry name" value="P-loop containing nucleotide triphosphate hydrolases"/>
    <property type="match status" value="1"/>
</dbReference>
<dbReference type="HAMAP" id="MF_00235">
    <property type="entry name" value="Adenylate_kinase_Adk"/>
    <property type="match status" value="1"/>
</dbReference>
<dbReference type="InterPro" id="IPR006259">
    <property type="entry name" value="Adenyl_kin_sub"/>
</dbReference>
<dbReference type="InterPro" id="IPR000850">
    <property type="entry name" value="Adenylat/UMP-CMP_kin"/>
</dbReference>
<dbReference type="InterPro" id="IPR033690">
    <property type="entry name" value="Adenylat_kinase_CS"/>
</dbReference>
<dbReference type="InterPro" id="IPR027417">
    <property type="entry name" value="P-loop_NTPase"/>
</dbReference>
<dbReference type="NCBIfam" id="TIGR01351">
    <property type="entry name" value="adk"/>
    <property type="match status" value="1"/>
</dbReference>
<dbReference type="NCBIfam" id="NF001381">
    <property type="entry name" value="PRK00279.1-3"/>
    <property type="match status" value="1"/>
</dbReference>
<dbReference type="NCBIfam" id="NF011100">
    <property type="entry name" value="PRK14527.1"/>
    <property type="match status" value="1"/>
</dbReference>
<dbReference type="NCBIfam" id="NF011101">
    <property type="entry name" value="PRK14528.1"/>
    <property type="match status" value="1"/>
</dbReference>
<dbReference type="NCBIfam" id="NF011104">
    <property type="entry name" value="PRK14531.1"/>
    <property type="match status" value="1"/>
</dbReference>
<dbReference type="NCBIfam" id="NF011105">
    <property type="entry name" value="PRK14532.1"/>
    <property type="match status" value="1"/>
</dbReference>
<dbReference type="PANTHER" id="PTHR23359">
    <property type="entry name" value="NUCLEOTIDE KINASE"/>
    <property type="match status" value="1"/>
</dbReference>
<dbReference type="Pfam" id="PF00406">
    <property type="entry name" value="ADK"/>
    <property type="match status" value="1"/>
</dbReference>
<dbReference type="PRINTS" id="PR00094">
    <property type="entry name" value="ADENYLTKNASE"/>
</dbReference>
<dbReference type="SUPFAM" id="SSF52540">
    <property type="entry name" value="P-loop containing nucleoside triphosphate hydrolases"/>
    <property type="match status" value="1"/>
</dbReference>
<dbReference type="PROSITE" id="PS00113">
    <property type="entry name" value="ADENYLATE_KINASE"/>
    <property type="match status" value="1"/>
</dbReference>
<sequence>MRLILLGPPGAGKGTQAGLLTKKHGIPQLSTGDMLRAAVAQQSEIGKRAKAVMDAGQLVSDEIVNQIVSERIDAPDCANGFILDGYPRTVPQAQALSQMLSGKGLKLDAVIELKVDENALVKRMESRVAETIAKGGQVRSDDNPEAFRKRLVEYREKTAPLSSYYAGTGELRVINGMAPVEEVTAEIERILVPA</sequence>
<accession>A9M5M9</accession>
<name>KAD_BRUC2</name>
<gene>
    <name evidence="1" type="primary">adk</name>
    <name type="ordered locus">BCAN_A1235</name>
</gene>
<comment type="function">
    <text evidence="1">Catalyzes the reversible transfer of the terminal phosphate group between ATP and AMP. Plays an important role in cellular energy homeostasis and in adenine nucleotide metabolism.</text>
</comment>
<comment type="catalytic activity">
    <reaction evidence="1">
        <text>AMP + ATP = 2 ADP</text>
        <dbReference type="Rhea" id="RHEA:12973"/>
        <dbReference type="ChEBI" id="CHEBI:30616"/>
        <dbReference type="ChEBI" id="CHEBI:456215"/>
        <dbReference type="ChEBI" id="CHEBI:456216"/>
        <dbReference type="EC" id="2.7.4.3"/>
    </reaction>
</comment>
<comment type="pathway">
    <text evidence="1">Purine metabolism; AMP biosynthesis via salvage pathway; AMP from ADP: step 1/1.</text>
</comment>
<comment type="subunit">
    <text evidence="1">Monomer.</text>
</comment>
<comment type="subcellular location">
    <subcellularLocation>
        <location evidence="1">Cytoplasm</location>
    </subcellularLocation>
</comment>
<comment type="domain">
    <text evidence="1">Consists of three domains, a large central CORE domain and two small peripheral domains, NMPbind and LID, which undergo movements during catalysis. The LID domain closes over the site of phosphoryl transfer upon ATP binding. Assembling and dissambling the active center during each catalytic cycle provides an effective means to prevent ATP hydrolysis.</text>
</comment>
<comment type="similarity">
    <text evidence="1">Belongs to the adenylate kinase family.</text>
</comment>
<reference key="1">
    <citation type="submission" date="2007-10" db="EMBL/GenBank/DDBJ databases">
        <title>Brucella canis ATCC 23365 whole genome shotgun sequencing project.</title>
        <authorList>
            <person name="Setubal J.C."/>
            <person name="Bowns C."/>
            <person name="Boyle S."/>
            <person name="Crasta O.R."/>
            <person name="Czar M.J."/>
            <person name="Dharmanolla C."/>
            <person name="Gillespie J.J."/>
            <person name="Kenyon R.W."/>
            <person name="Lu J."/>
            <person name="Mane S."/>
            <person name="Mohapatra S."/>
            <person name="Nagrani S."/>
            <person name="Purkayastha A."/>
            <person name="Rajasimha H.K."/>
            <person name="Shallom J.M."/>
            <person name="Shallom S."/>
            <person name="Shukla M."/>
            <person name="Snyder E.E."/>
            <person name="Sobral B.W."/>
            <person name="Wattam A.R."/>
            <person name="Will R."/>
            <person name="Williams K."/>
            <person name="Yoo H."/>
            <person name="Bruce D."/>
            <person name="Detter C."/>
            <person name="Munk C."/>
            <person name="Brettin T.S."/>
        </authorList>
    </citation>
    <scope>NUCLEOTIDE SEQUENCE [LARGE SCALE GENOMIC DNA]</scope>
    <source>
        <strain>ATCC 23365 / NCTC 10854 / RM-666</strain>
    </source>
</reference>
<proteinExistence type="inferred from homology"/>
<protein>
    <recommendedName>
        <fullName evidence="1">Adenylate kinase</fullName>
        <shortName evidence="1">AK</shortName>
        <ecNumber evidence="1">2.7.4.3</ecNumber>
    </recommendedName>
    <alternativeName>
        <fullName evidence="1">ATP-AMP transphosphorylase</fullName>
    </alternativeName>
    <alternativeName>
        <fullName evidence="1">ATP:AMP phosphotransferase</fullName>
    </alternativeName>
    <alternativeName>
        <fullName evidence="1">Adenylate monophosphate kinase</fullName>
    </alternativeName>
</protein>
<feature type="chain" id="PRO_1000078264" description="Adenylate kinase">
    <location>
        <begin position="1"/>
        <end position="194"/>
    </location>
</feature>
<feature type="region of interest" description="NMP" evidence="1">
    <location>
        <begin position="30"/>
        <end position="59"/>
    </location>
</feature>
<feature type="region of interest" description="LID" evidence="1">
    <location>
        <begin position="126"/>
        <end position="142"/>
    </location>
</feature>
<feature type="binding site" evidence="1">
    <location>
        <begin position="10"/>
        <end position="15"/>
    </location>
    <ligand>
        <name>ATP</name>
        <dbReference type="ChEBI" id="CHEBI:30616"/>
    </ligand>
</feature>
<feature type="binding site" evidence="1">
    <location>
        <position position="31"/>
    </location>
    <ligand>
        <name>AMP</name>
        <dbReference type="ChEBI" id="CHEBI:456215"/>
    </ligand>
</feature>
<feature type="binding site" evidence="1">
    <location>
        <position position="36"/>
    </location>
    <ligand>
        <name>AMP</name>
        <dbReference type="ChEBI" id="CHEBI:456215"/>
    </ligand>
</feature>
<feature type="binding site" evidence="1">
    <location>
        <begin position="57"/>
        <end position="59"/>
    </location>
    <ligand>
        <name>AMP</name>
        <dbReference type="ChEBI" id="CHEBI:456215"/>
    </ligand>
</feature>
<feature type="binding site" evidence="1">
    <location>
        <begin position="85"/>
        <end position="88"/>
    </location>
    <ligand>
        <name>AMP</name>
        <dbReference type="ChEBI" id="CHEBI:456215"/>
    </ligand>
</feature>
<feature type="binding site" evidence="1">
    <location>
        <position position="92"/>
    </location>
    <ligand>
        <name>AMP</name>
        <dbReference type="ChEBI" id="CHEBI:456215"/>
    </ligand>
</feature>
<feature type="binding site" evidence="1">
    <location>
        <position position="127"/>
    </location>
    <ligand>
        <name>ATP</name>
        <dbReference type="ChEBI" id="CHEBI:30616"/>
    </ligand>
</feature>
<feature type="binding site" evidence="1">
    <location>
        <position position="139"/>
    </location>
    <ligand>
        <name>AMP</name>
        <dbReference type="ChEBI" id="CHEBI:456215"/>
    </ligand>
</feature>
<feature type="binding site" evidence="1">
    <location>
        <position position="150"/>
    </location>
    <ligand>
        <name>AMP</name>
        <dbReference type="ChEBI" id="CHEBI:456215"/>
    </ligand>
</feature>
<feature type="binding site" evidence="1">
    <location>
        <position position="178"/>
    </location>
    <ligand>
        <name>ATP</name>
        <dbReference type="ChEBI" id="CHEBI:30616"/>
    </ligand>
</feature>
<organism>
    <name type="scientific">Brucella canis (strain ATCC 23365 / NCTC 10854 / RM-666)</name>
    <dbReference type="NCBI Taxonomy" id="483179"/>
    <lineage>
        <taxon>Bacteria</taxon>
        <taxon>Pseudomonadati</taxon>
        <taxon>Pseudomonadota</taxon>
        <taxon>Alphaproteobacteria</taxon>
        <taxon>Hyphomicrobiales</taxon>
        <taxon>Brucellaceae</taxon>
        <taxon>Brucella/Ochrobactrum group</taxon>
        <taxon>Brucella</taxon>
    </lineage>
</organism>